<gene>
    <name type="primary">bmpA</name>
</gene>
<reference key="1">
    <citation type="journal article" date="1997" name="J. Clin. Microbiol.">
        <title>Heterogeneity of BmpA (P39) among European isolates of Borrelia burgdorferi sensu lato and influence of interspecies variability on serodiagnosis.</title>
        <authorList>
            <person name="Roessler D."/>
            <person name="Hauser U."/>
            <person name="Wilske B."/>
        </authorList>
    </citation>
    <scope>NUCLEOTIDE SEQUENCE [GENOMIC DNA]</scope>
    <source>
        <strain>PLe</strain>
        <strain>PLj7</strain>
        <strain>PWudI</strain>
    </source>
</reference>
<comment type="function">
    <text evidence="2 3">Immunogenic protein (PubMed:9350727). May be part of an ABC-type nucleoside uptake system involved in the purine salvage pathway (By similarity).</text>
</comment>
<comment type="subunit">
    <text evidence="1">Monomer.</text>
</comment>
<comment type="subcellular location">
    <subcellularLocation>
        <location evidence="5">Cell inner membrane</location>
        <topology evidence="5">Lipid-anchor</topology>
    </subcellularLocation>
</comment>
<comment type="similarity">
    <text evidence="5">Belongs to the BMP lipoprotein family.</text>
</comment>
<name>BMPA_BORAF</name>
<organism>
    <name type="scientific">Borreliella afzelii</name>
    <name type="common">Borrelia afzelii</name>
    <dbReference type="NCBI Taxonomy" id="29518"/>
    <lineage>
        <taxon>Bacteria</taxon>
        <taxon>Pseudomonadati</taxon>
        <taxon>Spirochaetota</taxon>
        <taxon>Spirochaetia</taxon>
        <taxon>Spirochaetales</taxon>
        <taxon>Borreliaceae</taxon>
        <taxon>Borreliella</taxon>
    </lineage>
</organism>
<keyword id="KW-0997">Cell inner membrane</keyword>
<keyword id="KW-1003">Cell membrane</keyword>
<keyword id="KW-0449">Lipoprotein</keyword>
<keyword id="KW-0472">Membrane</keyword>
<keyword id="KW-0564">Palmitate</keyword>
<keyword id="KW-0732">Signal</keyword>
<keyword id="KW-0813">Transport</keyword>
<evidence type="ECO:0000250" key="1">
    <source>
        <dbReference type="UniProtKB" id="P0CL55"/>
    </source>
</evidence>
<evidence type="ECO:0000250" key="2">
    <source>
        <dbReference type="UniProtKB" id="Q45010"/>
    </source>
</evidence>
<evidence type="ECO:0000269" key="3">
    <source>
    </source>
</evidence>
<evidence type="ECO:0000303" key="4">
    <source>
    </source>
</evidence>
<evidence type="ECO:0000305" key="5"/>
<proteinExistence type="inferred from homology"/>
<protein>
    <recommendedName>
        <fullName>Basic membrane protein A</fullName>
    </recommendedName>
    <alternativeName>
        <fullName evidence="4">Immunodominant antigen P39</fullName>
    </alternativeName>
    <alternativeName>
        <fullName evidence="2">Probable substrate-binding protein BmpA</fullName>
    </alternativeName>
</protein>
<sequence>FLSCSGKSGLESGIPKVSLVIDGTFDDKSFNESALNGVKKLKEEFEIELVLKESSTNSYLSDLEGLKDAGSNLIWLIGYKFSDVAKAVSLQNSEMKYAIIDPVYSNEPIPANLVGMTFRAQEGAFLTGYIAAKVSKTGKIGFLGGIEGDIVDAFRYGYEAGAKYANKDIKIFSQYIGSFSDLEAGRSVATKMYSDGIDIIHHAAGLGGIGAIEVAKELGSGHYIIGVDEDQSYLAPNNVITSTTKDVGRSLNLLTSNYLKTNTFEGGKLINYGLKEGVVGFVRNPKMIPFEVEKEIDSLSSKIINKEVIVPYNKESYEKFLKEFI</sequence>
<feature type="signal peptide" evidence="5">
    <location>
        <begin position="1" status="less than"/>
        <end position="3"/>
    </location>
</feature>
<feature type="chain" id="PRO_0000017997" description="Basic membrane protein A">
    <location>
        <begin position="4"/>
        <end position="325"/>
    </location>
</feature>
<feature type="lipid moiety-binding region" description="N-palmitoyl cysteine" evidence="5">
    <location>
        <position position="4"/>
    </location>
</feature>
<feature type="lipid moiety-binding region" description="S-diacylglycerol cysteine" evidence="5">
    <location>
        <position position="4"/>
    </location>
</feature>
<feature type="sequence variant" description="In strain: PLe.">
    <original>A</original>
    <variation>S</variation>
    <location>
        <position position="111"/>
    </location>
</feature>
<feature type="sequence variant" description="In strain: PLj7.">
    <original>I</original>
    <variation>T</variation>
    <location>
        <position position="200"/>
    </location>
</feature>
<feature type="sequence variant" description="In strain: PLj7.">
    <original>I</original>
    <variation>V</variation>
    <location>
        <position position="240"/>
    </location>
</feature>
<feature type="sequence variant" description="In strain: PLe.">
    <original>L</original>
    <variation>F</variation>
    <location>
        <position position="254"/>
    </location>
</feature>
<feature type="non-terminal residue">
    <location>
        <position position="1"/>
    </location>
</feature>
<accession>P0C223</accession>
<accession>O31280</accession>
<accession>O31281</accession>
<accession>O31282</accession>
<accession>O31283</accession>
<dbReference type="EMBL" id="X97237">
    <property type="protein sequence ID" value="CAA65876.1"/>
    <property type="molecule type" value="Genomic_DNA"/>
</dbReference>
<dbReference type="EMBL" id="X97239">
    <property type="protein sequence ID" value="CAA65878.1"/>
    <property type="molecule type" value="Genomic_DNA"/>
</dbReference>
<dbReference type="EMBL" id="X97241">
    <property type="protein sequence ID" value="CAA65880.1"/>
    <property type="molecule type" value="Genomic_DNA"/>
</dbReference>
<dbReference type="SMR" id="P0C223"/>
<dbReference type="GO" id="GO:0005886">
    <property type="term" value="C:plasma membrane"/>
    <property type="evidence" value="ECO:0007669"/>
    <property type="project" value="UniProtKB-SubCell"/>
</dbReference>
<dbReference type="CDD" id="cd06354">
    <property type="entry name" value="PBP1_PrnA-like"/>
    <property type="match status" value="1"/>
</dbReference>
<dbReference type="Gene3D" id="3.40.50.2300">
    <property type="match status" value="2"/>
</dbReference>
<dbReference type="InterPro" id="IPR050957">
    <property type="entry name" value="BMP_lipoprotein"/>
</dbReference>
<dbReference type="InterPro" id="IPR028082">
    <property type="entry name" value="Peripla_BP_I"/>
</dbReference>
<dbReference type="InterPro" id="IPR003760">
    <property type="entry name" value="PnrA-like"/>
</dbReference>
<dbReference type="PANTHER" id="PTHR34296:SF2">
    <property type="entry name" value="ABC TRANSPORTER GUANOSINE-BINDING PROTEIN NUPN"/>
    <property type="match status" value="1"/>
</dbReference>
<dbReference type="PANTHER" id="PTHR34296">
    <property type="entry name" value="TRANSCRIPTIONAL ACTIVATOR PROTEIN MED"/>
    <property type="match status" value="1"/>
</dbReference>
<dbReference type="Pfam" id="PF02608">
    <property type="entry name" value="Bmp"/>
    <property type="match status" value="1"/>
</dbReference>
<dbReference type="SUPFAM" id="SSF53822">
    <property type="entry name" value="Periplasmic binding protein-like I"/>
    <property type="match status" value="1"/>
</dbReference>